<reference key="1">
    <citation type="submission" date="2008-12" db="EMBL/GenBank/DDBJ databases">
        <title>Complete sequence of chromosome of Methylobacterium chloromethanicum CM4.</title>
        <authorList>
            <consortium name="US DOE Joint Genome Institute"/>
            <person name="Lucas S."/>
            <person name="Copeland A."/>
            <person name="Lapidus A."/>
            <person name="Glavina del Rio T."/>
            <person name="Dalin E."/>
            <person name="Tice H."/>
            <person name="Bruce D."/>
            <person name="Goodwin L."/>
            <person name="Pitluck S."/>
            <person name="Chertkov O."/>
            <person name="Brettin T."/>
            <person name="Detter J.C."/>
            <person name="Han C."/>
            <person name="Larimer F."/>
            <person name="Land M."/>
            <person name="Hauser L."/>
            <person name="Kyrpides N."/>
            <person name="Mikhailova N."/>
            <person name="Marx C."/>
            <person name="Richardson P."/>
        </authorList>
    </citation>
    <scope>NUCLEOTIDE SEQUENCE [LARGE SCALE GENOMIC DNA]</scope>
    <source>
        <strain>CM4 / NCIMB 13688</strain>
    </source>
</reference>
<comment type="function">
    <text evidence="1">Binds directly to 16S ribosomal RNA.</text>
</comment>
<comment type="similarity">
    <text evidence="1">Belongs to the bacterial ribosomal protein bS20 family.</text>
</comment>
<organism>
    <name type="scientific">Methylorubrum extorquens (strain CM4 / NCIMB 13688)</name>
    <name type="common">Methylobacterium extorquens</name>
    <dbReference type="NCBI Taxonomy" id="440085"/>
    <lineage>
        <taxon>Bacteria</taxon>
        <taxon>Pseudomonadati</taxon>
        <taxon>Pseudomonadota</taxon>
        <taxon>Alphaproteobacteria</taxon>
        <taxon>Hyphomicrobiales</taxon>
        <taxon>Methylobacteriaceae</taxon>
        <taxon>Methylorubrum</taxon>
    </lineage>
</organism>
<proteinExistence type="inferred from homology"/>
<keyword id="KW-0687">Ribonucleoprotein</keyword>
<keyword id="KW-0689">Ribosomal protein</keyword>
<keyword id="KW-0694">RNA-binding</keyword>
<keyword id="KW-0699">rRNA-binding</keyword>
<feature type="chain" id="PRO_1000194251" description="Small ribosomal subunit protein bS20">
    <location>
        <begin position="1"/>
        <end position="88"/>
    </location>
</feature>
<evidence type="ECO:0000255" key="1">
    <source>
        <dbReference type="HAMAP-Rule" id="MF_00500"/>
    </source>
</evidence>
<evidence type="ECO:0000305" key="2"/>
<accession>B7KZZ9</accession>
<name>RS20_METC4</name>
<protein>
    <recommendedName>
        <fullName evidence="1">Small ribosomal subunit protein bS20</fullName>
    </recommendedName>
    <alternativeName>
        <fullName evidence="2">30S ribosomal protein S20</fullName>
    </alternativeName>
</protein>
<gene>
    <name evidence="1" type="primary">rpsT</name>
    <name type="ordered locus">Mchl_0001</name>
</gene>
<sequence>MANTVSAKKMTRKIAKRTAINRSRRSRMRTFVRKVEEAIASGDQGQALTALRAAEPEIMRAAQNGIVHKNNASRKVSRLAARVKAIAA</sequence>
<dbReference type="EMBL" id="CP001298">
    <property type="protein sequence ID" value="ACK80971.1"/>
    <property type="molecule type" value="Genomic_DNA"/>
</dbReference>
<dbReference type="RefSeq" id="WP_003598297.1">
    <property type="nucleotide sequence ID" value="NC_011757.1"/>
</dbReference>
<dbReference type="SMR" id="B7KZZ9"/>
<dbReference type="GeneID" id="72992610"/>
<dbReference type="KEGG" id="mch:Mchl_0001"/>
<dbReference type="HOGENOM" id="CLU_160655_3_0_5"/>
<dbReference type="Proteomes" id="UP000002385">
    <property type="component" value="Chromosome"/>
</dbReference>
<dbReference type="GO" id="GO:0005829">
    <property type="term" value="C:cytosol"/>
    <property type="evidence" value="ECO:0007669"/>
    <property type="project" value="TreeGrafter"/>
</dbReference>
<dbReference type="GO" id="GO:0015935">
    <property type="term" value="C:small ribosomal subunit"/>
    <property type="evidence" value="ECO:0007669"/>
    <property type="project" value="TreeGrafter"/>
</dbReference>
<dbReference type="GO" id="GO:0070181">
    <property type="term" value="F:small ribosomal subunit rRNA binding"/>
    <property type="evidence" value="ECO:0007669"/>
    <property type="project" value="TreeGrafter"/>
</dbReference>
<dbReference type="GO" id="GO:0003735">
    <property type="term" value="F:structural constituent of ribosome"/>
    <property type="evidence" value="ECO:0007669"/>
    <property type="project" value="InterPro"/>
</dbReference>
<dbReference type="GO" id="GO:0006412">
    <property type="term" value="P:translation"/>
    <property type="evidence" value="ECO:0007669"/>
    <property type="project" value="UniProtKB-UniRule"/>
</dbReference>
<dbReference type="FunFam" id="1.20.58.110:FF:000001">
    <property type="entry name" value="30S ribosomal protein S20"/>
    <property type="match status" value="1"/>
</dbReference>
<dbReference type="Gene3D" id="1.20.58.110">
    <property type="entry name" value="Ribosomal protein S20"/>
    <property type="match status" value="1"/>
</dbReference>
<dbReference type="HAMAP" id="MF_00500">
    <property type="entry name" value="Ribosomal_bS20"/>
    <property type="match status" value="1"/>
</dbReference>
<dbReference type="InterPro" id="IPR002583">
    <property type="entry name" value="Ribosomal_bS20"/>
</dbReference>
<dbReference type="InterPro" id="IPR036510">
    <property type="entry name" value="Ribosomal_bS20_sf"/>
</dbReference>
<dbReference type="NCBIfam" id="TIGR00029">
    <property type="entry name" value="S20"/>
    <property type="match status" value="1"/>
</dbReference>
<dbReference type="PANTHER" id="PTHR33398">
    <property type="entry name" value="30S RIBOSOMAL PROTEIN S20"/>
    <property type="match status" value="1"/>
</dbReference>
<dbReference type="PANTHER" id="PTHR33398:SF1">
    <property type="entry name" value="SMALL RIBOSOMAL SUBUNIT PROTEIN BS20C"/>
    <property type="match status" value="1"/>
</dbReference>
<dbReference type="Pfam" id="PF01649">
    <property type="entry name" value="Ribosomal_S20p"/>
    <property type="match status" value="1"/>
</dbReference>
<dbReference type="SUPFAM" id="SSF46992">
    <property type="entry name" value="Ribosomal protein S20"/>
    <property type="match status" value="1"/>
</dbReference>